<accession>A5UCU0</accession>
<evidence type="ECO:0000255" key="1">
    <source>
        <dbReference type="HAMAP-Rule" id="MF_00683"/>
    </source>
</evidence>
<evidence type="ECO:0000256" key="2">
    <source>
        <dbReference type="SAM" id="MobiDB-lite"/>
    </source>
</evidence>
<comment type="function">
    <text evidence="1">Pole-localizer protein involved in the regulation of several cellular processes.</text>
</comment>
<comment type="subcellular location">
    <subcellularLocation>
        <location evidence="1">Cytoplasm</location>
    </subcellularLocation>
</comment>
<comment type="similarity">
    <text evidence="1">Belongs to the pole-localizer TmaR family.</text>
</comment>
<protein>
    <recommendedName>
        <fullName evidence="1">Pole-localizer protein TmaR</fullName>
    </recommendedName>
</protein>
<sequence>MEIVNKQSFQDVLEYVRMYRLKNRIKRDMEDNNRKIRDNQKRILLLDNLNQYIRDDMTIAEVRGIIESMRDDYESRVDDYTIRNAELSKQRREASTKMKEQKKAHAELLKNAEK</sequence>
<gene>
    <name evidence="1" type="primary">tmaR</name>
    <name type="ordered locus">CGSHiEE_06200</name>
</gene>
<name>TMAR_HAEIE</name>
<feature type="chain" id="PRO_1000044931" description="Pole-localizer protein TmaR">
    <location>
        <begin position="1"/>
        <end position="114"/>
    </location>
</feature>
<feature type="region of interest" description="Disordered" evidence="2">
    <location>
        <begin position="89"/>
        <end position="114"/>
    </location>
</feature>
<feature type="coiled-coil region" evidence="1">
    <location>
        <begin position="70"/>
        <end position="111"/>
    </location>
</feature>
<proteinExistence type="inferred from homology"/>
<keyword id="KW-0175">Coiled coil</keyword>
<keyword id="KW-0963">Cytoplasm</keyword>
<dbReference type="EMBL" id="CP000671">
    <property type="protein sequence ID" value="ABQ98591.1"/>
    <property type="molecule type" value="Genomic_DNA"/>
</dbReference>
<dbReference type="SMR" id="A5UCU0"/>
<dbReference type="KEGG" id="hip:CGSHiEE_06200"/>
<dbReference type="HOGENOM" id="CLU_153146_0_0_6"/>
<dbReference type="GO" id="GO:0005829">
    <property type="term" value="C:cytosol"/>
    <property type="evidence" value="ECO:0007669"/>
    <property type="project" value="TreeGrafter"/>
</dbReference>
<dbReference type="HAMAP" id="MF_00683">
    <property type="entry name" value="Pole_loc_TmaR"/>
    <property type="match status" value="1"/>
</dbReference>
<dbReference type="InterPro" id="IPR007458">
    <property type="entry name" value="DUF496"/>
</dbReference>
<dbReference type="NCBIfam" id="NF003844">
    <property type="entry name" value="PRK05423.1"/>
    <property type="match status" value="1"/>
</dbReference>
<dbReference type="PANTHER" id="PTHR39591">
    <property type="entry name" value="UPF0265 PROTEIN YEEX"/>
    <property type="match status" value="1"/>
</dbReference>
<dbReference type="PANTHER" id="PTHR39591:SF1">
    <property type="entry name" value="UPF0265 PROTEIN YEEX"/>
    <property type="match status" value="1"/>
</dbReference>
<dbReference type="Pfam" id="PF04363">
    <property type="entry name" value="DUF496"/>
    <property type="match status" value="1"/>
</dbReference>
<dbReference type="PIRSF" id="PIRSF028773">
    <property type="entry name" value="UCP028773"/>
    <property type="match status" value="1"/>
</dbReference>
<reference key="1">
    <citation type="journal article" date="2007" name="Genome Biol.">
        <title>Characterization and modeling of the Haemophilus influenzae core and supragenomes based on the complete genomic sequences of Rd and 12 clinical nontypeable strains.</title>
        <authorList>
            <person name="Hogg J.S."/>
            <person name="Hu F.Z."/>
            <person name="Janto B."/>
            <person name="Boissy R."/>
            <person name="Hayes J."/>
            <person name="Keefe R."/>
            <person name="Post J.C."/>
            <person name="Ehrlich G.D."/>
        </authorList>
    </citation>
    <scope>NUCLEOTIDE SEQUENCE [LARGE SCALE GENOMIC DNA]</scope>
    <source>
        <strain>PittEE</strain>
    </source>
</reference>
<organism>
    <name type="scientific">Haemophilus influenzae (strain PittEE)</name>
    <dbReference type="NCBI Taxonomy" id="374930"/>
    <lineage>
        <taxon>Bacteria</taxon>
        <taxon>Pseudomonadati</taxon>
        <taxon>Pseudomonadota</taxon>
        <taxon>Gammaproteobacteria</taxon>
        <taxon>Pasteurellales</taxon>
        <taxon>Pasteurellaceae</taxon>
        <taxon>Haemophilus</taxon>
    </lineage>
</organism>